<comment type="function">
    <text evidence="1">Plays an essential role in the initiation and regulation of chromosomal replication. ATP-DnaA binds to the origin of replication (oriC) to initiate formation of the DNA replication initiation complex once per cell cycle. Binds the DnaA box (a 9 base pair repeat at the origin) and separates the double-stranded (ds)DNA. Forms a right-handed helical filament on oriC DNA; dsDNA binds to the exterior of the filament while single-stranded (ss)DNA is stabiized in the filament's interior. The ATP-DnaA-oriC complex binds and stabilizes one strand of the AT-rich DNA unwinding element (DUE), permitting loading of DNA polymerase. After initiation quickly degrades to an ADP-DnaA complex that is not apt for DNA replication. Binds acidic phospholipids.</text>
</comment>
<comment type="subunit">
    <text evidence="1">Oligomerizes as a right-handed, spiral filament on DNA at oriC.</text>
</comment>
<comment type="subcellular location">
    <subcellularLocation>
        <location evidence="1">Cytoplasm</location>
    </subcellularLocation>
</comment>
<comment type="domain">
    <text evidence="1">Domain I is involved in oligomerization and binding regulators, domain II is flexibile and of varying length in different bacteria, domain III forms the AAA+ region, while domain IV binds dsDNA.</text>
</comment>
<comment type="similarity">
    <text evidence="1">Belongs to the DnaA family.</text>
</comment>
<accession>A0PKB2</accession>
<dbReference type="EMBL" id="CP000325">
    <property type="protein sequence ID" value="ABL02781.1"/>
    <property type="molecule type" value="Genomic_DNA"/>
</dbReference>
<dbReference type="RefSeq" id="WP_011738406.1">
    <property type="nucleotide sequence ID" value="NC_008611.1"/>
</dbReference>
<dbReference type="SMR" id="A0PKB2"/>
<dbReference type="KEGG" id="mul:MUL_0001"/>
<dbReference type="eggNOG" id="COG0593">
    <property type="taxonomic scope" value="Bacteria"/>
</dbReference>
<dbReference type="HOGENOM" id="CLU_026910_2_0_11"/>
<dbReference type="Proteomes" id="UP000000765">
    <property type="component" value="Chromosome"/>
</dbReference>
<dbReference type="GO" id="GO:0005737">
    <property type="term" value="C:cytoplasm"/>
    <property type="evidence" value="ECO:0007669"/>
    <property type="project" value="UniProtKB-SubCell"/>
</dbReference>
<dbReference type="GO" id="GO:0005886">
    <property type="term" value="C:plasma membrane"/>
    <property type="evidence" value="ECO:0007669"/>
    <property type="project" value="TreeGrafter"/>
</dbReference>
<dbReference type="GO" id="GO:0005524">
    <property type="term" value="F:ATP binding"/>
    <property type="evidence" value="ECO:0007669"/>
    <property type="project" value="UniProtKB-UniRule"/>
</dbReference>
<dbReference type="GO" id="GO:0016887">
    <property type="term" value="F:ATP hydrolysis activity"/>
    <property type="evidence" value="ECO:0007669"/>
    <property type="project" value="InterPro"/>
</dbReference>
<dbReference type="GO" id="GO:0003688">
    <property type="term" value="F:DNA replication origin binding"/>
    <property type="evidence" value="ECO:0007669"/>
    <property type="project" value="UniProtKB-UniRule"/>
</dbReference>
<dbReference type="GO" id="GO:0008289">
    <property type="term" value="F:lipid binding"/>
    <property type="evidence" value="ECO:0007669"/>
    <property type="project" value="UniProtKB-KW"/>
</dbReference>
<dbReference type="GO" id="GO:0006270">
    <property type="term" value="P:DNA replication initiation"/>
    <property type="evidence" value="ECO:0007669"/>
    <property type="project" value="UniProtKB-UniRule"/>
</dbReference>
<dbReference type="GO" id="GO:0006275">
    <property type="term" value="P:regulation of DNA replication"/>
    <property type="evidence" value="ECO:0007669"/>
    <property type="project" value="UniProtKB-UniRule"/>
</dbReference>
<dbReference type="CDD" id="cd00009">
    <property type="entry name" value="AAA"/>
    <property type="match status" value="1"/>
</dbReference>
<dbReference type="CDD" id="cd06571">
    <property type="entry name" value="Bac_DnaA_C"/>
    <property type="match status" value="1"/>
</dbReference>
<dbReference type="FunFam" id="1.10.1750.10:FF:000002">
    <property type="entry name" value="Chromosomal replication initiator protein DnaA"/>
    <property type="match status" value="1"/>
</dbReference>
<dbReference type="FunFam" id="1.10.8.60:FF:000003">
    <property type="entry name" value="Chromosomal replication initiator protein DnaA"/>
    <property type="match status" value="1"/>
</dbReference>
<dbReference type="FunFam" id="3.40.50.300:FF:000150">
    <property type="entry name" value="Chromosomal replication initiator protein DnaA"/>
    <property type="match status" value="1"/>
</dbReference>
<dbReference type="Gene3D" id="1.10.1750.10">
    <property type="match status" value="1"/>
</dbReference>
<dbReference type="Gene3D" id="1.10.8.60">
    <property type="match status" value="1"/>
</dbReference>
<dbReference type="Gene3D" id="3.30.300.180">
    <property type="match status" value="1"/>
</dbReference>
<dbReference type="Gene3D" id="3.40.50.300">
    <property type="entry name" value="P-loop containing nucleotide triphosphate hydrolases"/>
    <property type="match status" value="1"/>
</dbReference>
<dbReference type="HAMAP" id="MF_00377">
    <property type="entry name" value="DnaA_bact"/>
    <property type="match status" value="1"/>
</dbReference>
<dbReference type="InterPro" id="IPR003593">
    <property type="entry name" value="AAA+_ATPase"/>
</dbReference>
<dbReference type="InterPro" id="IPR001957">
    <property type="entry name" value="Chromosome_initiator_DnaA"/>
</dbReference>
<dbReference type="InterPro" id="IPR020591">
    <property type="entry name" value="Chromosome_initiator_DnaA-like"/>
</dbReference>
<dbReference type="InterPro" id="IPR018312">
    <property type="entry name" value="Chromosome_initiator_DnaA_CS"/>
</dbReference>
<dbReference type="InterPro" id="IPR013159">
    <property type="entry name" value="DnaA_C"/>
</dbReference>
<dbReference type="InterPro" id="IPR013317">
    <property type="entry name" value="DnaA_dom"/>
</dbReference>
<dbReference type="InterPro" id="IPR038454">
    <property type="entry name" value="DnaA_N_sf"/>
</dbReference>
<dbReference type="InterPro" id="IPR027417">
    <property type="entry name" value="P-loop_NTPase"/>
</dbReference>
<dbReference type="InterPro" id="IPR010921">
    <property type="entry name" value="Trp_repressor/repl_initiator"/>
</dbReference>
<dbReference type="NCBIfam" id="TIGR00362">
    <property type="entry name" value="DnaA"/>
    <property type="match status" value="1"/>
</dbReference>
<dbReference type="NCBIfam" id="NF010686">
    <property type="entry name" value="PRK14086.1"/>
    <property type="match status" value="1"/>
</dbReference>
<dbReference type="PANTHER" id="PTHR30050">
    <property type="entry name" value="CHROMOSOMAL REPLICATION INITIATOR PROTEIN DNAA"/>
    <property type="match status" value="1"/>
</dbReference>
<dbReference type="PANTHER" id="PTHR30050:SF2">
    <property type="entry name" value="CHROMOSOMAL REPLICATION INITIATOR PROTEIN DNAA"/>
    <property type="match status" value="1"/>
</dbReference>
<dbReference type="Pfam" id="PF00308">
    <property type="entry name" value="Bac_DnaA"/>
    <property type="match status" value="1"/>
</dbReference>
<dbReference type="Pfam" id="PF08299">
    <property type="entry name" value="Bac_DnaA_C"/>
    <property type="match status" value="1"/>
</dbReference>
<dbReference type="PRINTS" id="PR00051">
    <property type="entry name" value="DNAA"/>
</dbReference>
<dbReference type="SMART" id="SM00382">
    <property type="entry name" value="AAA"/>
    <property type="match status" value="1"/>
</dbReference>
<dbReference type="SMART" id="SM00760">
    <property type="entry name" value="Bac_DnaA_C"/>
    <property type="match status" value="1"/>
</dbReference>
<dbReference type="SUPFAM" id="SSF52540">
    <property type="entry name" value="P-loop containing nucleoside triphosphate hydrolases"/>
    <property type="match status" value="1"/>
</dbReference>
<dbReference type="SUPFAM" id="SSF48295">
    <property type="entry name" value="TrpR-like"/>
    <property type="match status" value="1"/>
</dbReference>
<dbReference type="PROSITE" id="PS01008">
    <property type="entry name" value="DNAA"/>
    <property type="match status" value="1"/>
</dbReference>
<proteinExistence type="inferred from homology"/>
<keyword id="KW-0067">ATP-binding</keyword>
<keyword id="KW-0963">Cytoplasm</keyword>
<keyword id="KW-0235">DNA replication</keyword>
<keyword id="KW-0238">DNA-binding</keyword>
<keyword id="KW-0446">Lipid-binding</keyword>
<keyword id="KW-0547">Nucleotide-binding</keyword>
<feature type="chain" id="PRO_1000048675" description="Chromosomal replication initiator protein DnaA">
    <location>
        <begin position="1"/>
        <end position="510"/>
    </location>
</feature>
<feature type="region of interest" description="Domain I, interacts with DnaA modulators" evidence="1">
    <location>
        <begin position="1"/>
        <end position="107"/>
    </location>
</feature>
<feature type="region of interest" description="Domain II" evidence="1">
    <location>
        <begin position="107"/>
        <end position="169"/>
    </location>
</feature>
<feature type="region of interest" description="Disordered" evidence="2">
    <location>
        <begin position="119"/>
        <end position="168"/>
    </location>
</feature>
<feature type="region of interest" description="Domain III, AAA+ region" evidence="1">
    <location>
        <begin position="170"/>
        <end position="386"/>
    </location>
</feature>
<feature type="region of interest" description="Domain IV, binds dsDNA" evidence="1">
    <location>
        <begin position="387"/>
        <end position="510"/>
    </location>
</feature>
<feature type="binding site" evidence="1">
    <location>
        <position position="214"/>
    </location>
    <ligand>
        <name>ATP</name>
        <dbReference type="ChEBI" id="CHEBI:30616"/>
    </ligand>
</feature>
<feature type="binding site" evidence="1">
    <location>
        <position position="216"/>
    </location>
    <ligand>
        <name>ATP</name>
        <dbReference type="ChEBI" id="CHEBI:30616"/>
    </ligand>
</feature>
<feature type="binding site" evidence="1">
    <location>
        <position position="217"/>
    </location>
    <ligand>
        <name>ATP</name>
        <dbReference type="ChEBI" id="CHEBI:30616"/>
    </ligand>
</feature>
<feature type="binding site" evidence="1">
    <location>
        <position position="218"/>
    </location>
    <ligand>
        <name>ATP</name>
        <dbReference type="ChEBI" id="CHEBI:30616"/>
    </ligand>
</feature>
<reference key="1">
    <citation type="journal article" date="2007" name="Genome Res.">
        <title>Reductive evolution and niche adaptation inferred from the genome of Mycobacterium ulcerans, the causative agent of Buruli ulcer.</title>
        <authorList>
            <person name="Stinear T.P."/>
            <person name="Seemann T."/>
            <person name="Pidot S."/>
            <person name="Frigui W."/>
            <person name="Reysset G."/>
            <person name="Garnier T."/>
            <person name="Meurice G."/>
            <person name="Simon D."/>
            <person name="Bouchier C."/>
            <person name="Ma L."/>
            <person name="Tichit M."/>
            <person name="Porter J.L."/>
            <person name="Ryan J."/>
            <person name="Johnson P.D.R."/>
            <person name="Davies J.K."/>
            <person name="Jenkin G.A."/>
            <person name="Small P.L.C."/>
            <person name="Jones L.M."/>
            <person name="Tekaia F."/>
            <person name="Laval F."/>
            <person name="Daffe M."/>
            <person name="Parkhill J."/>
            <person name="Cole S.T."/>
        </authorList>
    </citation>
    <scope>NUCLEOTIDE SEQUENCE [LARGE SCALE GENOMIC DNA]</scope>
    <source>
        <strain>Agy99</strain>
    </source>
</reference>
<gene>
    <name evidence="1" type="primary">dnaA</name>
    <name type="ordered locus">MUL_0001</name>
</gene>
<organism>
    <name type="scientific">Mycobacterium ulcerans (strain Agy99)</name>
    <dbReference type="NCBI Taxonomy" id="362242"/>
    <lineage>
        <taxon>Bacteria</taxon>
        <taxon>Bacillati</taxon>
        <taxon>Actinomycetota</taxon>
        <taxon>Actinomycetes</taxon>
        <taxon>Mycobacteriales</taxon>
        <taxon>Mycobacteriaceae</taxon>
        <taxon>Mycobacterium</taxon>
        <taxon>Mycobacterium ulcerans group</taxon>
    </lineage>
</organism>
<protein>
    <recommendedName>
        <fullName evidence="1">Chromosomal replication initiator protein DnaA</fullName>
    </recommendedName>
</protein>
<name>DNAA_MYCUA</name>
<sequence length="510" mass="56777">MTNDPGSGFAAVWNAVVAELNGEPNTDGDAGTGTTLTSPLTPQQRAWLNLVQPLTIVEGFALLSVPSSFVQNEIERHLRTPITAALSRRLGQQIQLGVRIAPPPADDDDDSVAAAVEDPGLEASPETSQEVSDEIDDFGENAPKSRQSWPTHFKKRSTDADTSASADGTSLNRRYTFDTFVIGASNRFAHAATLAIAEAPARAYNPLFIWGESGLGKTHLLHAAGNYAQRLFPGMRVKYVSTEEFTNDFINSLRDDRKVAFKRSYRDVDVLLVDDIQFIEGKEGIQEEFFHTFNTLHNANKQIVISSDRPPKQLATLEDRLRTRFEWGLITDVQPPELETRIAILRKKAQMERLAVPDDVLELIASSIERNIRELEGALIRVTAFASLNKTPIDKALAEIVLRDLIADADTMQISAATIMAATVEYFDTTVEELRGPGKTRALAQSRQIAMYLCRELTDLSLPKIGQAFGRDHTTVMYAQRKILSEMAERREVFDHVKELTTRIRQRSKR</sequence>
<evidence type="ECO:0000255" key="1">
    <source>
        <dbReference type="HAMAP-Rule" id="MF_00377"/>
    </source>
</evidence>
<evidence type="ECO:0000256" key="2">
    <source>
        <dbReference type="SAM" id="MobiDB-lite"/>
    </source>
</evidence>